<evidence type="ECO:0000255" key="1">
    <source>
        <dbReference type="HAMAP-Rule" id="MF_00262"/>
    </source>
</evidence>
<name>MINE_BRASO</name>
<keyword id="KW-0131">Cell cycle</keyword>
<keyword id="KW-0132">Cell division</keyword>
<keyword id="KW-1185">Reference proteome</keyword>
<accession>A4Z1Z9</accession>
<dbReference type="EMBL" id="CU234118">
    <property type="protein sequence ID" value="CAL80175.1"/>
    <property type="molecule type" value="Genomic_DNA"/>
</dbReference>
<dbReference type="RefSeq" id="WP_009029981.1">
    <property type="nucleotide sequence ID" value="NC_009445.1"/>
</dbReference>
<dbReference type="SMR" id="A4Z1Z9"/>
<dbReference type="STRING" id="114615.BRADO6568"/>
<dbReference type="KEGG" id="bra:BRADO6568"/>
<dbReference type="eggNOG" id="COG0851">
    <property type="taxonomic scope" value="Bacteria"/>
</dbReference>
<dbReference type="HOGENOM" id="CLU_137929_2_0_5"/>
<dbReference type="OrthoDB" id="9802655at2"/>
<dbReference type="Proteomes" id="UP000001994">
    <property type="component" value="Chromosome"/>
</dbReference>
<dbReference type="GO" id="GO:0051301">
    <property type="term" value="P:cell division"/>
    <property type="evidence" value="ECO:0007669"/>
    <property type="project" value="UniProtKB-KW"/>
</dbReference>
<dbReference type="GO" id="GO:0032955">
    <property type="term" value="P:regulation of division septum assembly"/>
    <property type="evidence" value="ECO:0007669"/>
    <property type="project" value="InterPro"/>
</dbReference>
<dbReference type="Gene3D" id="3.30.1070.10">
    <property type="entry name" value="Cell division topological specificity factor MinE"/>
    <property type="match status" value="1"/>
</dbReference>
<dbReference type="HAMAP" id="MF_00262">
    <property type="entry name" value="MinE"/>
    <property type="match status" value="1"/>
</dbReference>
<dbReference type="InterPro" id="IPR005527">
    <property type="entry name" value="MinE"/>
</dbReference>
<dbReference type="InterPro" id="IPR036707">
    <property type="entry name" value="MinE_sf"/>
</dbReference>
<dbReference type="NCBIfam" id="TIGR01215">
    <property type="entry name" value="minE"/>
    <property type="match status" value="1"/>
</dbReference>
<dbReference type="NCBIfam" id="NF001422">
    <property type="entry name" value="PRK00296.1"/>
    <property type="match status" value="1"/>
</dbReference>
<dbReference type="Pfam" id="PF03776">
    <property type="entry name" value="MinE"/>
    <property type="match status" value="1"/>
</dbReference>
<dbReference type="SUPFAM" id="SSF55229">
    <property type="entry name" value="Cell division protein MinE topological specificity domain"/>
    <property type="match status" value="1"/>
</dbReference>
<protein>
    <recommendedName>
        <fullName evidence="1">Cell division topological specificity factor</fullName>
    </recommendedName>
</protein>
<organism>
    <name type="scientific">Bradyrhizobium sp. (strain ORS 278)</name>
    <dbReference type="NCBI Taxonomy" id="114615"/>
    <lineage>
        <taxon>Bacteria</taxon>
        <taxon>Pseudomonadati</taxon>
        <taxon>Pseudomonadota</taxon>
        <taxon>Alphaproteobacteria</taxon>
        <taxon>Hyphomicrobiales</taxon>
        <taxon>Nitrobacteraceae</taxon>
        <taxon>Bradyrhizobium</taxon>
    </lineage>
</organism>
<sequence>MSVLRLFTGRAASAPVARERLQILLAHERSLRGQPDLLMQLREEILAVVSRHVLLDPDKVIVRMDRGKHVSTLEVDIELPNGADRAFASAG</sequence>
<reference key="1">
    <citation type="journal article" date="2007" name="Science">
        <title>Legumes symbioses: absence of nod genes in photosynthetic bradyrhizobia.</title>
        <authorList>
            <person name="Giraud E."/>
            <person name="Moulin L."/>
            <person name="Vallenet D."/>
            <person name="Barbe V."/>
            <person name="Cytryn E."/>
            <person name="Avarre J.-C."/>
            <person name="Jaubert M."/>
            <person name="Simon D."/>
            <person name="Cartieaux F."/>
            <person name="Prin Y."/>
            <person name="Bena G."/>
            <person name="Hannibal L."/>
            <person name="Fardoux J."/>
            <person name="Kojadinovic M."/>
            <person name="Vuillet L."/>
            <person name="Lajus A."/>
            <person name="Cruveiller S."/>
            <person name="Rouy Z."/>
            <person name="Mangenot S."/>
            <person name="Segurens B."/>
            <person name="Dossat C."/>
            <person name="Franck W.L."/>
            <person name="Chang W.-S."/>
            <person name="Saunders E."/>
            <person name="Bruce D."/>
            <person name="Richardson P."/>
            <person name="Normand P."/>
            <person name="Dreyfus B."/>
            <person name="Pignol D."/>
            <person name="Stacey G."/>
            <person name="Emerich D."/>
            <person name="Vermeglio A."/>
            <person name="Medigue C."/>
            <person name="Sadowsky M."/>
        </authorList>
    </citation>
    <scope>NUCLEOTIDE SEQUENCE [LARGE SCALE GENOMIC DNA]</scope>
    <source>
        <strain>ORS 278</strain>
    </source>
</reference>
<feature type="chain" id="PRO_0000298082" description="Cell division topological specificity factor">
    <location>
        <begin position="1"/>
        <end position="91"/>
    </location>
</feature>
<comment type="function">
    <text evidence="1">Prevents the cell division inhibition by proteins MinC and MinD at internal division sites while permitting inhibition at polar sites. This ensures cell division at the proper site by restricting the formation of a division septum at the midpoint of the long axis of the cell.</text>
</comment>
<comment type="similarity">
    <text evidence="1">Belongs to the MinE family.</text>
</comment>
<gene>
    <name evidence="1" type="primary">minE</name>
    <name type="ordered locus">BRADO6568</name>
</gene>
<proteinExistence type="inferred from homology"/>